<comment type="catalytic activity">
    <reaction evidence="1">
        <text>tRNA(Leu) + L-leucine + ATP = L-leucyl-tRNA(Leu) + AMP + diphosphate</text>
        <dbReference type="Rhea" id="RHEA:11688"/>
        <dbReference type="Rhea" id="RHEA-COMP:9613"/>
        <dbReference type="Rhea" id="RHEA-COMP:9622"/>
        <dbReference type="ChEBI" id="CHEBI:30616"/>
        <dbReference type="ChEBI" id="CHEBI:33019"/>
        <dbReference type="ChEBI" id="CHEBI:57427"/>
        <dbReference type="ChEBI" id="CHEBI:78442"/>
        <dbReference type="ChEBI" id="CHEBI:78494"/>
        <dbReference type="ChEBI" id="CHEBI:456215"/>
        <dbReference type="EC" id="6.1.1.4"/>
    </reaction>
</comment>
<comment type="subcellular location">
    <subcellularLocation>
        <location evidence="1">Cytoplasm</location>
    </subcellularLocation>
</comment>
<comment type="similarity">
    <text evidence="1">Belongs to the class-I aminoacyl-tRNA synthetase family.</text>
</comment>
<reference key="1">
    <citation type="journal article" date="2004" name="Nucleic Acids Res.">
        <title>Comparative analysis of the Borrelia garinii genome.</title>
        <authorList>
            <person name="Gloeckner G."/>
            <person name="Lehmann R."/>
            <person name="Romualdi A."/>
            <person name="Pradella S."/>
            <person name="Schulte-Spechtel U."/>
            <person name="Schilhabel M."/>
            <person name="Wilske B."/>
            <person name="Suehnel J."/>
            <person name="Platzer M."/>
        </authorList>
    </citation>
    <scope>NUCLEOTIDE SEQUENCE [LARGE SCALE GENOMIC DNA]</scope>
    <source>
        <strain>ATCC BAA-2496 / DSM 23469 / PBi</strain>
    </source>
</reference>
<accession>Q662B4</accession>
<name>SYL_BORGP</name>
<organism>
    <name type="scientific">Borrelia garinii subsp. bavariensis (strain ATCC BAA-2496 / DSM 23469 / PBi)</name>
    <name type="common">Borreliella bavariensis</name>
    <dbReference type="NCBI Taxonomy" id="290434"/>
    <lineage>
        <taxon>Bacteria</taxon>
        <taxon>Pseudomonadati</taxon>
        <taxon>Spirochaetota</taxon>
        <taxon>Spirochaetia</taxon>
        <taxon>Spirochaetales</taxon>
        <taxon>Borreliaceae</taxon>
        <taxon>Borreliella</taxon>
    </lineage>
</organism>
<gene>
    <name evidence="1" type="primary">leuS</name>
    <name type="ordered locus">BG0254</name>
</gene>
<protein>
    <recommendedName>
        <fullName evidence="1">Leucine--tRNA ligase</fullName>
        <ecNumber evidence="1">6.1.1.4</ecNumber>
    </recommendedName>
    <alternativeName>
        <fullName evidence="1">Leucyl-tRNA synthetase</fullName>
        <shortName evidence="1">LeuRS</shortName>
    </alternativeName>
</protein>
<sequence>MSKYEFIKIEKKWQEFWDNNKTYKVKEDPNIPKEKRLYILDMFPYPSANGLHVGHPEGYTATDIFGRYKLLNGFHVLHPIGFDSFGLPAENYAIQTGTHPQKSTEENINKFKKQIKALGFAYDWDREIRTHDENYYKWTQWIFLELYKKGLAYAKEMPVWYCPELGTVLANEEIIQTPDGPKSERGFHNVEKKYLRQWVLKITKYAERLLNDLEELEWPESVKEMQRNWIGKSTGVEIDFEIEGHNDKIKVFTTRPDTIFGITYLVIAPESKLIEKITKNNFKRNVLKYVKHEELKSDLKRTSLEKDKSGVFTGSYAFHPITNEKIPIWIGSYVLGTYGSGAVMGVPAHDERDFQFAKKYKLKILPVISKSGKNEILEKAFIDDGISINSPNEFNNLKNSEVKDKVIEWLIKNKKGKEKVTYKLRDWIFSRQRYWGEPIPILFDKLGNAVPLEKNDLPLKLPKTANYKPSRTGESPLSRIKDWVNLKDTGFTRETNTMPQWAGSCWYYLRYLDPKNPKEFASKKKIEYWMPVDLYIGGAEHTVLHLLYSRFWHKVLYDLGYVNTKEPFKKLINQGIITAFSYQKENGILIPNDQVIEKNSKFFDKRDNKEVIQVIAKMSKSLKNVINPDDIIKEFGADSIRIYEMFMGPLTDSKPWNTKGIIGVFRFLNKIWNLREKELSKDNPPKEIISQLHKAIKKVTEDTEKLSFNTAISAMMIFVNELIKYEKNYLNIFKPFIIILSPYAPHLAEELWEYIGETPSLFKNSKWPEFDENLIIKDAKEIVLQINGKMKDKILLSKETDEEELKEIAMGNSKIKANLLNKKIVKIIAIKNKLVNIVIK</sequence>
<evidence type="ECO:0000255" key="1">
    <source>
        <dbReference type="HAMAP-Rule" id="MF_00049"/>
    </source>
</evidence>
<dbReference type="EC" id="6.1.1.4" evidence="1"/>
<dbReference type="EMBL" id="CP000013">
    <property type="protein sequence ID" value="AAU07107.1"/>
    <property type="molecule type" value="Genomic_DNA"/>
</dbReference>
<dbReference type="RefSeq" id="WP_011193591.1">
    <property type="nucleotide sequence ID" value="NZ_CP028872.1"/>
</dbReference>
<dbReference type="SMR" id="Q662B4"/>
<dbReference type="GeneID" id="45161044"/>
<dbReference type="KEGG" id="bga:BG0254"/>
<dbReference type="eggNOG" id="COG0495">
    <property type="taxonomic scope" value="Bacteria"/>
</dbReference>
<dbReference type="HOGENOM" id="CLU_004427_0_0_12"/>
<dbReference type="OrthoDB" id="9810365at2"/>
<dbReference type="Proteomes" id="UP000002276">
    <property type="component" value="Chromosome"/>
</dbReference>
<dbReference type="GO" id="GO:0005829">
    <property type="term" value="C:cytosol"/>
    <property type="evidence" value="ECO:0007669"/>
    <property type="project" value="TreeGrafter"/>
</dbReference>
<dbReference type="GO" id="GO:0002161">
    <property type="term" value="F:aminoacyl-tRNA deacylase activity"/>
    <property type="evidence" value="ECO:0007669"/>
    <property type="project" value="InterPro"/>
</dbReference>
<dbReference type="GO" id="GO:0005524">
    <property type="term" value="F:ATP binding"/>
    <property type="evidence" value="ECO:0007669"/>
    <property type="project" value="UniProtKB-UniRule"/>
</dbReference>
<dbReference type="GO" id="GO:0004823">
    <property type="term" value="F:leucine-tRNA ligase activity"/>
    <property type="evidence" value="ECO:0007669"/>
    <property type="project" value="UniProtKB-UniRule"/>
</dbReference>
<dbReference type="GO" id="GO:0006429">
    <property type="term" value="P:leucyl-tRNA aminoacylation"/>
    <property type="evidence" value="ECO:0007669"/>
    <property type="project" value="UniProtKB-UniRule"/>
</dbReference>
<dbReference type="CDD" id="cd07958">
    <property type="entry name" value="Anticodon_Ia_Leu_BEm"/>
    <property type="match status" value="1"/>
</dbReference>
<dbReference type="CDD" id="cd00812">
    <property type="entry name" value="LeuRS_core"/>
    <property type="match status" value="1"/>
</dbReference>
<dbReference type="FunFam" id="3.40.50.620:FF:000056">
    <property type="entry name" value="Leucine--tRNA ligase"/>
    <property type="match status" value="1"/>
</dbReference>
<dbReference type="FunFam" id="3.40.50.620:FF:000077">
    <property type="entry name" value="Leucine--tRNA ligase"/>
    <property type="match status" value="1"/>
</dbReference>
<dbReference type="FunFam" id="1.10.730.10:FF:000011">
    <property type="entry name" value="Leucine--tRNA ligase chloroplastic/mitochondrial"/>
    <property type="match status" value="1"/>
</dbReference>
<dbReference type="Gene3D" id="3.40.50.620">
    <property type="entry name" value="HUPs"/>
    <property type="match status" value="2"/>
</dbReference>
<dbReference type="Gene3D" id="1.10.730.10">
    <property type="entry name" value="Isoleucyl-tRNA Synthetase, Domain 1"/>
    <property type="match status" value="1"/>
</dbReference>
<dbReference type="HAMAP" id="MF_00049_B">
    <property type="entry name" value="Leu_tRNA_synth_B"/>
    <property type="match status" value="1"/>
</dbReference>
<dbReference type="InterPro" id="IPR001412">
    <property type="entry name" value="aa-tRNA-synth_I_CS"/>
</dbReference>
<dbReference type="InterPro" id="IPR002300">
    <property type="entry name" value="aa-tRNA-synth_Ia"/>
</dbReference>
<dbReference type="InterPro" id="IPR002302">
    <property type="entry name" value="Leu-tRNA-ligase"/>
</dbReference>
<dbReference type="InterPro" id="IPR025709">
    <property type="entry name" value="Leu_tRNA-synth_edit"/>
</dbReference>
<dbReference type="InterPro" id="IPR013155">
    <property type="entry name" value="M/V/L/I-tRNA-synth_anticd-bd"/>
</dbReference>
<dbReference type="InterPro" id="IPR015413">
    <property type="entry name" value="Methionyl/Leucyl_tRNA_Synth"/>
</dbReference>
<dbReference type="InterPro" id="IPR014729">
    <property type="entry name" value="Rossmann-like_a/b/a_fold"/>
</dbReference>
<dbReference type="InterPro" id="IPR009080">
    <property type="entry name" value="tRNAsynth_Ia_anticodon-bd"/>
</dbReference>
<dbReference type="InterPro" id="IPR009008">
    <property type="entry name" value="Val/Leu/Ile-tRNA-synth_edit"/>
</dbReference>
<dbReference type="NCBIfam" id="TIGR00396">
    <property type="entry name" value="leuS_bact"/>
    <property type="match status" value="1"/>
</dbReference>
<dbReference type="PANTHER" id="PTHR43740:SF2">
    <property type="entry name" value="LEUCINE--TRNA LIGASE, MITOCHONDRIAL"/>
    <property type="match status" value="1"/>
</dbReference>
<dbReference type="PANTHER" id="PTHR43740">
    <property type="entry name" value="LEUCYL-TRNA SYNTHETASE"/>
    <property type="match status" value="1"/>
</dbReference>
<dbReference type="Pfam" id="PF08264">
    <property type="entry name" value="Anticodon_1"/>
    <property type="match status" value="1"/>
</dbReference>
<dbReference type="Pfam" id="PF00133">
    <property type="entry name" value="tRNA-synt_1"/>
    <property type="match status" value="1"/>
</dbReference>
<dbReference type="Pfam" id="PF13603">
    <property type="entry name" value="tRNA-synt_1_2"/>
    <property type="match status" value="1"/>
</dbReference>
<dbReference type="Pfam" id="PF09334">
    <property type="entry name" value="tRNA-synt_1g"/>
    <property type="match status" value="1"/>
</dbReference>
<dbReference type="PRINTS" id="PR00985">
    <property type="entry name" value="TRNASYNTHLEU"/>
</dbReference>
<dbReference type="SUPFAM" id="SSF47323">
    <property type="entry name" value="Anticodon-binding domain of a subclass of class I aminoacyl-tRNA synthetases"/>
    <property type="match status" value="1"/>
</dbReference>
<dbReference type="SUPFAM" id="SSF52374">
    <property type="entry name" value="Nucleotidylyl transferase"/>
    <property type="match status" value="1"/>
</dbReference>
<dbReference type="SUPFAM" id="SSF50677">
    <property type="entry name" value="ValRS/IleRS/LeuRS editing domain"/>
    <property type="match status" value="1"/>
</dbReference>
<dbReference type="PROSITE" id="PS00178">
    <property type="entry name" value="AA_TRNA_LIGASE_I"/>
    <property type="match status" value="1"/>
</dbReference>
<proteinExistence type="inferred from homology"/>
<feature type="chain" id="PRO_0000151980" description="Leucine--tRNA ligase">
    <location>
        <begin position="1"/>
        <end position="840"/>
    </location>
</feature>
<feature type="short sequence motif" description="'HIGH' region">
    <location>
        <begin position="44"/>
        <end position="55"/>
    </location>
</feature>
<feature type="short sequence motif" description="'KMSKS' region">
    <location>
        <begin position="617"/>
        <end position="621"/>
    </location>
</feature>
<feature type="binding site" evidence="1">
    <location>
        <position position="620"/>
    </location>
    <ligand>
        <name>ATP</name>
        <dbReference type="ChEBI" id="CHEBI:30616"/>
    </ligand>
</feature>
<keyword id="KW-0030">Aminoacyl-tRNA synthetase</keyword>
<keyword id="KW-0067">ATP-binding</keyword>
<keyword id="KW-0963">Cytoplasm</keyword>
<keyword id="KW-0436">Ligase</keyword>
<keyword id="KW-0547">Nucleotide-binding</keyword>
<keyword id="KW-0648">Protein biosynthesis</keyword>